<dbReference type="EMBL" id="AL009126">
    <property type="protein sequence ID" value="CAB14036.1"/>
    <property type="molecule type" value="Genomic_DNA"/>
</dbReference>
<dbReference type="RefSeq" id="NP_390001.1">
    <property type="nucleotide sequence ID" value="NC_000964.3"/>
</dbReference>
<dbReference type="RefSeq" id="WP_009967519.1">
    <property type="nucleotide sequence ID" value="NZ_OZ025638.1"/>
</dbReference>
<dbReference type="SMR" id="O31959"/>
<dbReference type="FunCoup" id="O31959">
    <property type="interactions" value="65"/>
</dbReference>
<dbReference type="STRING" id="224308.BSU21180"/>
<dbReference type="PaxDb" id="224308-BSU21180"/>
<dbReference type="EnsemblBacteria" id="CAB14036">
    <property type="protein sequence ID" value="CAB14036"/>
    <property type="gene ID" value="BSU_21180"/>
</dbReference>
<dbReference type="GeneID" id="939154"/>
<dbReference type="KEGG" id="bsu:BSU21180"/>
<dbReference type="PATRIC" id="fig|224308.179.peg.2312"/>
<dbReference type="InParanoid" id="O31959"/>
<dbReference type="OrthoDB" id="2903492at2"/>
<dbReference type="BioCyc" id="BSUB:BSU21180-MONOMER"/>
<dbReference type="Proteomes" id="UP000001570">
    <property type="component" value="Chromosome"/>
</dbReference>
<reference key="1">
    <citation type="journal article" date="1997" name="Nature">
        <title>The complete genome sequence of the Gram-positive bacterium Bacillus subtilis.</title>
        <authorList>
            <person name="Kunst F."/>
            <person name="Ogasawara N."/>
            <person name="Moszer I."/>
            <person name="Albertini A.M."/>
            <person name="Alloni G."/>
            <person name="Azevedo V."/>
            <person name="Bertero M.G."/>
            <person name="Bessieres P."/>
            <person name="Bolotin A."/>
            <person name="Borchert S."/>
            <person name="Borriss R."/>
            <person name="Boursier L."/>
            <person name="Brans A."/>
            <person name="Braun M."/>
            <person name="Brignell S.C."/>
            <person name="Bron S."/>
            <person name="Brouillet S."/>
            <person name="Bruschi C.V."/>
            <person name="Caldwell B."/>
            <person name="Capuano V."/>
            <person name="Carter N.M."/>
            <person name="Choi S.-K."/>
            <person name="Codani J.-J."/>
            <person name="Connerton I.F."/>
            <person name="Cummings N.J."/>
            <person name="Daniel R.A."/>
            <person name="Denizot F."/>
            <person name="Devine K.M."/>
            <person name="Duesterhoeft A."/>
            <person name="Ehrlich S.D."/>
            <person name="Emmerson P.T."/>
            <person name="Entian K.-D."/>
            <person name="Errington J."/>
            <person name="Fabret C."/>
            <person name="Ferrari E."/>
            <person name="Foulger D."/>
            <person name="Fritz C."/>
            <person name="Fujita M."/>
            <person name="Fujita Y."/>
            <person name="Fuma S."/>
            <person name="Galizzi A."/>
            <person name="Galleron N."/>
            <person name="Ghim S.-Y."/>
            <person name="Glaser P."/>
            <person name="Goffeau A."/>
            <person name="Golightly E.J."/>
            <person name="Grandi G."/>
            <person name="Guiseppi G."/>
            <person name="Guy B.J."/>
            <person name="Haga K."/>
            <person name="Haiech J."/>
            <person name="Harwood C.R."/>
            <person name="Henaut A."/>
            <person name="Hilbert H."/>
            <person name="Holsappel S."/>
            <person name="Hosono S."/>
            <person name="Hullo M.-F."/>
            <person name="Itaya M."/>
            <person name="Jones L.-M."/>
            <person name="Joris B."/>
            <person name="Karamata D."/>
            <person name="Kasahara Y."/>
            <person name="Klaerr-Blanchard M."/>
            <person name="Klein C."/>
            <person name="Kobayashi Y."/>
            <person name="Koetter P."/>
            <person name="Koningstein G."/>
            <person name="Krogh S."/>
            <person name="Kumano M."/>
            <person name="Kurita K."/>
            <person name="Lapidus A."/>
            <person name="Lardinois S."/>
            <person name="Lauber J."/>
            <person name="Lazarevic V."/>
            <person name="Lee S.-M."/>
            <person name="Levine A."/>
            <person name="Liu H."/>
            <person name="Masuda S."/>
            <person name="Mauel C."/>
            <person name="Medigue C."/>
            <person name="Medina N."/>
            <person name="Mellado R.P."/>
            <person name="Mizuno M."/>
            <person name="Moestl D."/>
            <person name="Nakai S."/>
            <person name="Noback M."/>
            <person name="Noone D."/>
            <person name="O'Reilly M."/>
            <person name="Ogawa K."/>
            <person name="Ogiwara A."/>
            <person name="Oudega B."/>
            <person name="Park S.-H."/>
            <person name="Parro V."/>
            <person name="Pohl T.M."/>
            <person name="Portetelle D."/>
            <person name="Porwollik S."/>
            <person name="Prescott A.M."/>
            <person name="Presecan E."/>
            <person name="Pujic P."/>
            <person name="Purnelle B."/>
            <person name="Rapoport G."/>
            <person name="Rey M."/>
            <person name="Reynolds S."/>
            <person name="Rieger M."/>
            <person name="Rivolta C."/>
            <person name="Rocha E."/>
            <person name="Roche B."/>
            <person name="Rose M."/>
            <person name="Sadaie Y."/>
            <person name="Sato T."/>
            <person name="Scanlan E."/>
            <person name="Schleich S."/>
            <person name="Schroeter R."/>
            <person name="Scoffone F."/>
            <person name="Sekiguchi J."/>
            <person name="Sekowska A."/>
            <person name="Seror S.J."/>
            <person name="Serror P."/>
            <person name="Shin B.-S."/>
            <person name="Soldo B."/>
            <person name="Sorokin A."/>
            <person name="Tacconi E."/>
            <person name="Takagi T."/>
            <person name="Takahashi H."/>
            <person name="Takemaru K."/>
            <person name="Takeuchi M."/>
            <person name="Tamakoshi A."/>
            <person name="Tanaka T."/>
            <person name="Terpstra P."/>
            <person name="Tognoni A."/>
            <person name="Tosato V."/>
            <person name="Uchiyama S."/>
            <person name="Vandenbol M."/>
            <person name="Vannier F."/>
            <person name="Vassarotti A."/>
            <person name="Viari A."/>
            <person name="Wambutt R."/>
            <person name="Wedler E."/>
            <person name="Wedler H."/>
            <person name="Weitzenegger T."/>
            <person name="Winters P."/>
            <person name="Wipat A."/>
            <person name="Yamamoto H."/>
            <person name="Yamane K."/>
            <person name="Yasumoto K."/>
            <person name="Yata K."/>
            <person name="Yoshida K."/>
            <person name="Yoshikawa H.-F."/>
            <person name="Zumstein E."/>
            <person name="Yoshikawa H."/>
            <person name="Danchin A."/>
        </authorList>
    </citation>
    <scope>NUCLEOTIDE SEQUENCE [LARGE SCALE GENOMIC DNA]</scope>
    <source>
        <strain>168</strain>
    </source>
</reference>
<feature type="chain" id="PRO_0000359935" description="SPbeta prophage-derived uncharacterized protein YomY">
    <location>
        <begin position="1"/>
        <end position="84"/>
    </location>
</feature>
<gene>
    <name type="primary">yomY</name>
    <name type="ordered locus">BSU21180</name>
</gene>
<organism>
    <name type="scientific">Bacillus subtilis (strain 168)</name>
    <dbReference type="NCBI Taxonomy" id="224308"/>
    <lineage>
        <taxon>Bacteria</taxon>
        <taxon>Bacillati</taxon>
        <taxon>Bacillota</taxon>
        <taxon>Bacilli</taxon>
        <taxon>Bacillales</taxon>
        <taxon>Bacillaceae</taxon>
        <taxon>Bacillus</taxon>
    </lineage>
</organism>
<protein>
    <recommendedName>
        <fullName>SPbeta prophage-derived uncharacterized protein YomY</fullName>
    </recommendedName>
</protein>
<sequence length="84" mass="9489">MSTIKVKSAHKDGQIKLEDLDVVCNKLCKRNNSVLFKLEKYLNKKLLSDPELTEIRDTILTVSGELSRLRDNLVTDGDSNEGLQ</sequence>
<keyword id="KW-1185">Reference proteome</keyword>
<name>YOMY_BACSU</name>
<proteinExistence type="predicted"/>
<accession>O31959</accession>